<gene>
    <name evidence="1" type="primary">GATB</name>
    <name type="ordered locus">Sb05g020870</name>
</gene>
<name>GATB_SORBI</name>
<dbReference type="EC" id="6.3.5.-" evidence="1"/>
<dbReference type="EMBL" id="CM000764">
    <property type="protein sequence ID" value="EES09889.1"/>
    <property type="molecule type" value="Genomic_DNA"/>
</dbReference>
<dbReference type="RefSeq" id="XP_002450901.1">
    <property type="nucleotide sequence ID" value="XM_002450856.1"/>
</dbReference>
<dbReference type="SMR" id="C5Y3V8"/>
<dbReference type="FunCoup" id="C5Y3V8">
    <property type="interactions" value="1465"/>
</dbReference>
<dbReference type="STRING" id="4558.C5Y3V8"/>
<dbReference type="EnsemblPlants" id="EES09889">
    <property type="protein sequence ID" value="EES09889"/>
    <property type="gene ID" value="SORBI_3005G143500"/>
</dbReference>
<dbReference type="GeneID" id="8057007"/>
<dbReference type="Gramene" id="EES09889">
    <property type="protein sequence ID" value="EES09889"/>
    <property type="gene ID" value="SORBI_3005G143500"/>
</dbReference>
<dbReference type="KEGG" id="sbi:8057007"/>
<dbReference type="eggNOG" id="KOG2438">
    <property type="taxonomic scope" value="Eukaryota"/>
</dbReference>
<dbReference type="HOGENOM" id="CLU_019240_0_0_1"/>
<dbReference type="InParanoid" id="C5Y3V8"/>
<dbReference type="OMA" id="ARKWWMG"/>
<dbReference type="OrthoDB" id="1722066at2759"/>
<dbReference type="Proteomes" id="UP000000768">
    <property type="component" value="Chromosome 5"/>
</dbReference>
<dbReference type="GO" id="GO:0009507">
    <property type="term" value="C:chloroplast"/>
    <property type="evidence" value="ECO:0007669"/>
    <property type="project" value="UniProtKB-SubCell"/>
</dbReference>
<dbReference type="GO" id="GO:0030956">
    <property type="term" value="C:glutamyl-tRNA(Gln) amidotransferase complex"/>
    <property type="evidence" value="ECO:0007669"/>
    <property type="project" value="UniProtKB-UniRule"/>
</dbReference>
<dbReference type="GO" id="GO:0005739">
    <property type="term" value="C:mitochondrion"/>
    <property type="evidence" value="ECO:0007669"/>
    <property type="project" value="UniProtKB-SubCell"/>
</dbReference>
<dbReference type="GO" id="GO:0005524">
    <property type="term" value="F:ATP binding"/>
    <property type="evidence" value="ECO:0007669"/>
    <property type="project" value="UniProtKB-KW"/>
</dbReference>
<dbReference type="GO" id="GO:0050567">
    <property type="term" value="F:glutaminyl-tRNA synthase (glutamine-hydrolyzing) activity"/>
    <property type="evidence" value="ECO:0000318"/>
    <property type="project" value="GO_Central"/>
</dbReference>
<dbReference type="GO" id="GO:0070681">
    <property type="term" value="P:glutaminyl-tRNAGln biosynthesis via transamidation"/>
    <property type="evidence" value="ECO:0000318"/>
    <property type="project" value="GO_Central"/>
</dbReference>
<dbReference type="GO" id="GO:0032543">
    <property type="term" value="P:mitochondrial translation"/>
    <property type="evidence" value="ECO:0007669"/>
    <property type="project" value="UniProtKB-UniRule"/>
</dbReference>
<dbReference type="FunFam" id="1.10.10.410:FF:000001">
    <property type="entry name" value="Aspartyl/glutamyl-tRNA(Asn/Gln) amidotransferase subunit B"/>
    <property type="match status" value="1"/>
</dbReference>
<dbReference type="FunFam" id="1.10.150.380:FF:000001">
    <property type="entry name" value="Aspartyl/glutamyl-tRNA(Asn/Gln) amidotransferase subunit B"/>
    <property type="match status" value="1"/>
</dbReference>
<dbReference type="Gene3D" id="1.10.10.410">
    <property type="match status" value="1"/>
</dbReference>
<dbReference type="Gene3D" id="1.10.150.380">
    <property type="entry name" value="GatB domain, N-terminal subdomain"/>
    <property type="match status" value="1"/>
</dbReference>
<dbReference type="HAMAP" id="MF_00121">
    <property type="entry name" value="GatB"/>
    <property type="match status" value="1"/>
</dbReference>
<dbReference type="InterPro" id="IPR017959">
    <property type="entry name" value="Asn/Gln-tRNA_amidoTrfase_suB/E"/>
</dbReference>
<dbReference type="InterPro" id="IPR006075">
    <property type="entry name" value="Asn/Gln-tRNA_Trfase_suB/E_cat"/>
</dbReference>
<dbReference type="InterPro" id="IPR018027">
    <property type="entry name" value="Asn/Gln_amidotransferase"/>
</dbReference>
<dbReference type="InterPro" id="IPR003789">
    <property type="entry name" value="Asn/Gln_tRNA_amidoTrase-B-like"/>
</dbReference>
<dbReference type="InterPro" id="IPR004413">
    <property type="entry name" value="GatB"/>
</dbReference>
<dbReference type="InterPro" id="IPR042114">
    <property type="entry name" value="GatB_C_1"/>
</dbReference>
<dbReference type="InterPro" id="IPR023168">
    <property type="entry name" value="GatB_Yqey_C_2"/>
</dbReference>
<dbReference type="InterPro" id="IPR017958">
    <property type="entry name" value="Gln-tRNA_amidoTrfase_suB_CS"/>
</dbReference>
<dbReference type="InterPro" id="IPR014746">
    <property type="entry name" value="Gln_synth/guanido_kin_cat_dom"/>
</dbReference>
<dbReference type="NCBIfam" id="TIGR00133">
    <property type="entry name" value="gatB"/>
    <property type="match status" value="1"/>
</dbReference>
<dbReference type="NCBIfam" id="NF004012">
    <property type="entry name" value="PRK05477.1-2"/>
    <property type="match status" value="1"/>
</dbReference>
<dbReference type="NCBIfam" id="NF004014">
    <property type="entry name" value="PRK05477.1-4"/>
    <property type="match status" value="1"/>
</dbReference>
<dbReference type="PANTHER" id="PTHR11659">
    <property type="entry name" value="GLUTAMYL-TRNA GLN AMIDOTRANSFERASE SUBUNIT B MITOCHONDRIAL AND PROKARYOTIC PET112-RELATED"/>
    <property type="match status" value="1"/>
</dbReference>
<dbReference type="PANTHER" id="PTHR11659:SF0">
    <property type="entry name" value="GLUTAMYL-TRNA(GLN) AMIDOTRANSFERASE SUBUNIT B, MITOCHONDRIAL"/>
    <property type="match status" value="1"/>
</dbReference>
<dbReference type="Pfam" id="PF02934">
    <property type="entry name" value="GatB_N"/>
    <property type="match status" value="1"/>
</dbReference>
<dbReference type="Pfam" id="PF02637">
    <property type="entry name" value="GatB_Yqey"/>
    <property type="match status" value="1"/>
</dbReference>
<dbReference type="SMART" id="SM00845">
    <property type="entry name" value="GatB_Yqey"/>
    <property type="match status" value="1"/>
</dbReference>
<dbReference type="SUPFAM" id="SSF89095">
    <property type="entry name" value="GatB/YqeY motif"/>
    <property type="match status" value="1"/>
</dbReference>
<dbReference type="SUPFAM" id="SSF55931">
    <property type="entry name" value="Glutamine synthetase/guanido kinase"/>
    <property type="match status" value="1"/>
</dbReference>
<dbReference type="PROSITE" id="PS01234">
    <property type="entry name" value="GATB"/>
    <property type="match status" value="1"/>
</dbReference>
<comment type="function">
    <text evidence="1">Allows the formation of correctly charged Gln-tRNA(Gln) through the transamidation of misacylated Glu-tRNA(Gln) in chloroplasts and mitochondria. The reaction takes place in the presence of glutamine and ATP through an activated gamma-phospho-Glu-tRNA(Gln).</text>
</comment>
<comment type="catalytic activity">
    <reaction evidence="1">
        <text>L-glutamyl-tRNA(Gln) + L-glutamine + ATP + H2O = L-glutaminyl-tRNA(Gln) + L-glutamate + ADP + phosphate + H(+)</text>
        <dbReference type="Rhea" id="RHEA:17521"/>
        <dbReference type="Rhea" id="RHEA-COMP:9681"/>
        <dbReference type="Rhea" id="RHEA-COMP:9684"/>
        <dbReference type="ChEBI" id="CHEBI:15377"/>
        <dbReference type="ChEBI" id="CHEBI:15378"/>
        <dbReference type="ChEBI" id="CHEBI:29985"/>
        <dbReference type="ChEBI" id="CHEBI:30616"/>
        <dbReference type="ChEBI" id="CHEBI:43474"/>
        <dbReference type="ChEBI" id="CHEBI:58359"/>
        <dbReference type="ChEBI" id="CHEBI:78520"/>
        <dbReference type="ChEBI" id="CHEBI:78521"/>
        <dbReference type="ChEBI" id="CHEBI:456216"/>
    </reaction>
</comment>
<comment type="subunit">
    <text evidence="1">Subunit of the heterotrimeric GatCAB amidotransferase (AdT) complex, composed of A, B and C subunits.</text>
</comment>
<comment type="subcellular location">
    <subcellularLocation>
        <location evidence="1">Mitochondrion</location>
    </subcellularLocation>
    <subcellularLocation>
        <location evidence="1">Plastid</location>
        <location evidence="1">Chloroplast</location>
    </subcellularLocation>
</comment>
<comment type="miscellaneous">
    <text evidence="1">This protein may be expected to contain an N-terminal transit peptide but none has been predicted.</text>
</comment>
<comment type="similarity">
    <text evidence="1">Belongs to the GatB/GatE family. GatB subfamily.</text>
</comment>
<protein>
    <recommendedName>
        <fullName evidence="1">Glutamyl-tRNA(Gln) amidotransferase subunit B, chloroplastic/mitochondrial</fullName>
        <shortName evidence="1">Glu-AdT subunit B</shortName>
        <ecNumber evidence="1">6.3.5.-</ecNumber>
    </recommendedName>
</protein>
<feature type="chain" id="PRO_0000413235" description="Glutamyl-tRNA(Gln) amidotransferase subunit B, chloroplastic/mitochondrial">
    <location>
        <begin position="1"/>
        <end position="548"/>
    </location>
</feature>
<accession>C5Y3V8</accession>
<evidence type="ECO:0000255" key="1">
    <source>
        <dbReference type="HAMAP-Rule" id="MF_03147"/>
    </source>
</evidence>
<proteinExistence type="inferred from homology"/>
<reference key="1">
    <citation type="journal article" date="2009" name="Nature">
        <title>The Sorghum bicolor genome and the diversification of grasses.</title>
        <authorList>
            <person name="Paterson A.H."/>
            <person name="Bowers J.E."/>
            <person name="Bruggmann R."/>
            <person name="Dubchak I."/>
            <person name="Grimwood J."/>
            <person name="Gundlach H."/>
            <person name="Haberer G."/>
            <person name="Hellsten U."/>
            <person name="Mitros T."/>
            <person name="Poliakov A."/>
            <person name="Schmutz J."/>
            <person name="Spannagl M."/>
            <person name="Tang H."/>
            <person name="Wang X."/>
            <person name="Wicker T."/>
            <person name="Bharti A.K."/>
            <person name="Chapman J."/>
            <person name="Feltus F.A."/>
            <person name="Gowik U."/>
            <person name="Grigoriev I.V."/>
            <person name="Lyons E."/>
            <person name="Maher C.A."/>
            <person name="Martis M."/>
            <person name="Narechania A."/>
            <person name="Otillar R.P."/>
            <person name="Penning B.W."/>
            <person name="Salamov A.A."/>
            <person name="Wang Y."/>
            <person name="Zhang L."/>
            <person name="Carpita N.C."/>
            <person name="Freeling M."/>
            <person name="Gingle A.R."/>
            <person name="Hash C.T."/>
            <person name="Keller B."/>
            <person name="Klein P."/>
            <person name="Kresovich S."/>
            <person name="McCann M.C."/>
            <person name="Ming R."/>
            <person name="Peterson D.G."/>
            <person name="Mehboob-ur-Rahman M."/>
            <person name="Ware D."/>
            <person name="Westhoff P."/>
            <person name="Mayer K.F.X."/>
            <person name="Messing J."/>
            <person name="Rokhsar D.S."/>
        </authorList>
    </citation>
    <scope>NUCLEOTIDE SEQUENCE [LARGE SCALE GENOMIC DNA]</scope>
    <source>
        <strain>cv. BTx623</strain>
    </source>
</reference>
<reference key="2">
    <citation type="journal article" date="2018" name="Plant J.">
        <title>The Sorghum bicolor reference genome: improved assembly, gene annotations, a transcriptome atlas, and signatures of genome organization.</title>
        <authorList>
            <person name="McCormick R.F."/>
            <person name="Truong S.K."/>
            <person name="Sreedasyam A."/>
            <person name="Jenkins J."/>
            <person name="Shu S."/>
            <person name="Sims D."/>
            <person name="Kennedy M."/>
            <person name="Amirebrahimi M."/>
            <person name="Weers B.D."/>
            <person name="McKinley B."/>
            <person name="Mattison A."/>
            <person name="Morishige D.T."/>
            <person name="Grimwood J."/>
            <person name="Schmutz J."/>
            <person name="Mullet J.E."/>
        </authorList>
    </citation>
    <scope>GENOME REANNOTATION</scope>
    <source>
        <strain>cv. BTx623</strain>
    </source>
</reference>
<keyword id="KW-0067">ATP-binding</keyword>
<keyword id="KW-0150">Chloroplast</keyword>
<keyword id="KW-0436">Ligase</keyword>
<keyword id="KW-0496">Mitochondrion</keyword>
<keyword id="KW-0547">Nucleotide-binding</keyword>
<keyword id="KW-0934">Plastid</keyword>
<keyword id="KW-0648">Protein biosynthesis</keyword>
<keyword id="KW-1185">Reference proteome</keyword>
<sequence length="548" mass="60318">MALTLLRGMRTPVSSGSNPGLFFAVLRPRLSRFTARAESAQATEPKAAPPPRSIQLATKEAAEQKTQGFEAVIGIETHVQLSTVTKAFCSCPYSYGAQPNSTVCPTCMGHPGTLPVLNEKVVECAVKLGLALNCEISMTSKFDRKQYFYPDLPKGYQISQFDIPIAKKGHVDLDLPVEFGGGHRKFGITRVHMEEDAGKLLHSESSSYSQVDLNRAGVPLLEIVSEPDMRTGIEAAEYGAELQRIVRYLGVSNGNMQEGSLRCDVNVSIRPVGQSEFGTKVEIKNMNSFSAINRAIDYEISRQILLHKEGQADQIVQETRLWDESSQKTFTMRKKEGLADYRYFPEPDLPEVVLTSDYINEISKSMPELPEAKRRRYENMGLSMQDVLFLANDDNIGHFYDSTLEHGADAKLAANWIMGDIAAYLKDEKVSIDEIKLTPLELSELIASIKNGTISGKIGKEILAELIAKGGTVKGVIEEKDLVQIADPAAIEAMVDKVIADNPKQLEQYRAGKTKLQGFFAGQVMKASKGKANPVLLNKILGEKLNAN</sequence>
<organism>
    <name type="scientific">Sorghum bicolor</name>
    <name type="common">Sorghum</name>
    <name type="synonym">Sorghum vulgare</name>
    <dbReference type="NCBI Taxonomy" id="4558"/>
    <lineage>
        <taxon>Eukaryota</taxon>
        <taxon>Viridiplantae</taxon>
        <taxon>Streptophyta</taxon>
        <taxon>Embryophyta</taxon>
        <taxon>Tracheophyta</taxon>
        <taxon>Spermatophyta</taxon>
        <taxon>Magnoliopsida</taxon>
        <taxon>Liliopsida</taxon>
        <taxon>Poales</taxon>
        <taxon>Poaceae</taxon>
        <taxon>PACMAD clade</taxon>
        <taxon>Panicoideae</taxon>
        <taxon>Andropogonodae</taxon>
        <taxon>Andropogoneae</taxon>
        <taxon>Sorghinae</taxon>
        <taxon>Sorghum</taxon>
    </lineage>
</organism>